<keyword id="KW-0315">Glutamine amidotransferase</keyword>
<keyword id="KW-0456">Lyase</keyword>
<keyword id="KW-1185">Reference proteome</keyword>
<keyword id="KW-0843">Virulence</keyword>
<name>PHNB_PSEAE</name>
<comment type="function">
    <text evidence="1 3 4 5">Part of a heterotetrameric complex that catalyzes the two-step biosynthesis of anthranilate, a precursor for Pseudomonas quinolone signal (2-heptyl-3-hydroxy-4-quinolone; PQS) production which is required to induce the genes for the biosynthesis of the virulence factor pyocyanine (PCN), a characteristic blue-green phenazine pigment produced by P.aeruginosa (PubMed:11591691, PubMed:2153661, PubMed:23449919). In the first step, the glutamine-binding beta subunit (PhnB) of anthranilate synthase (AS) provides the glutamine amidotransferase activity which generates ammonia as a substrate that, along with chorismate, is used in the second step, catalyzed by the large alpha subunit of AS (PhnA) to produce anthranilate (By similarity).</text>
</comment>
<comment type="catalytic activity">
    <reaction evidence="9">
        <text>chorismate + L-glutamine = anthranilate + pyruvate + L-glutamate + H(+)</text>
        <dbReference type="Rhea" id="RHEA:21732"/>
        <dbReference type="ChEBI" id="CHEBI:15361"/>
        <dbReference type="ChEBI" id="CHEBI:15378"/>
        <dbReference type="ChEBI" id="CHEBI:16567"/>
        <dbReference type="ChEBI" id="CHEBI:29748"/>
        <dbReference type="ChEBI" id="CHEBI:29985"/>
        <dbReference type="ChEBI" id="CHEBI:58359"/>
        <dbReference type="EC" id="4.1.3.27"/>
    </reaction>
</comment>
<comment type="pathway">
    <text evidence="9">Secondary metabolite biosynthesis; pyocyanine biosynthesis.</text>
</comment>
<comment type="subunit">
    <text evidence="1">Heterotetramer consisting of two non-identical subunits: a beta subunit (PhnB) and a large alpha subunit (PhnA).</text>
</comment>
<comment type="disruption phenotype">
    <text evidence="4 5">Single disruption in strain PA04290 results in decreased pyocyanine synthesis (PubMed:2153661). Double phnA-phnB deletions are tryptophan prototrophs; they make less PQS (PubMed:23449919).</text>
</comment>
<comment type="miscellaneous">
    <text evidence="9">PhnAB is not feedback inhibited by tryptophan.</text>
</comment>
<sequence length="200" mass="21845">MRITLLDNFDSFTYNLVEQFCLLGAEVRVMRNDTPLPTIQAALLADGCELLVLSPGPGRPEDAGCMLELLAWARGRLPVLGVCLGHQALALAAGGAVGEARKPLHGKSTSLRFDQRHPLFDGIADLRVARYHSLVVSRLPEGFDCLADADGEIMAMADPRNRQLGLQFHPESILTTHGQRLLENALLWCGALAVRERLRA</sequence>
<proteinExistence type="evidence at protein level"/>
<evidence type="ECO:0000250" key="1">
    <source>
        <dbReference type="UniProtKB" id="P00900"/>
    </source>
</evidence>
<evidence type="ECO:0000255" key="2">
    <source>
        <dbReference type="PROSITE-ProRule" id="PRU00605"/>
    </source>
</evidence>
<evidence type="ECO:0000269" key="3">
    <source>
    </source>
</evidence>
<evidence type="ECO:0000269" key="4">
    <source>
    </source>
</evidence>
<evidence type="ECO:0000269" key="5">
    <source>
    </source>
</evidence>
<evidence type="ECO:0000303" key="6">
    <source>
    </source>
</evidence>
<evidence type="ECO:0000303" key="7">
    <source>
    </source>
</evidence>
<evidence type="ECO:0000305" key="8"/>
<evidence type="ECO:0000305" key="9">
    <source>
    </source>
</evidence>
<reference key="1">
    <citation type="journal article" date="1990" name="J. Bacteriol.">
        <title>Identification and characterization of genes for a second anthranilate synthase in Pseudomonas aeruginosa: interchangeability of the two anthranilate synthases and evolutionary implications.</title>
        <authorList>
            <person name="Essar D.W."/>
            <person name="Eberly L."/>
            <person name="Hadero A."/>
            <person name="Crawford I.P."/>
        </authorList>
    </citation>
    <scope>NUCLEOTIDE SEQUENCE [GENOMIC DNA]</scope>
    <scope>PROBABLE FUNCTION AS AN ANTHRANILATE SYNTHASE</scope>
    <scope>PATHWAY</scope>
    <scope>DISRUPTION PHENOTYPE</scope>
    <source>
        <strain>ATCC 15692 / DSM 22644 / CIP 104116 / JCM 14847 / LMG 12228 / 1C / PRS 101 / PAO1</strain>
        <strain>PA04290</strain>
        <strain>PAC174</strain>
    </source>
</reference>
<reference key="2">
    <citation type="journal article" date="1986" name="Mol. Biol. Evol.">
        <title>Structure and regulation of the anthranilate synthase genes in Pseudomonas aeruginosa: I. Sequence of trpG encoding the glutamine amidotransferase subunit.</title>
        <authorList>
            <person name="Crawford I.P."/>
            <person name="Eberly L."/>
        </authorList>
    </citation>
    <scope>NUCLEOTIDE SEQUENCE [GENOMIC DNA]</scope>
    <source>
        <strain>PAC174</strain>
    </source>
</reference>
<reference key="3">
    <citation type="journal article" date="2000" name="Nature">
        <title>Complete genome sequence of Pseudomonas aeruginosa PAO1, an opportunistic pathogen.</title>
        <authorList>
            <person name="Stover C.K."/>
            <person name="Pham X.-Q.T."/>
            <person name="Erwin A.L."/>
            <person name="Mizoguchi S.D."/>
            <person name="Warrener P."/>
            <person name="Hickey M.J."/>
            <person name="Brinkman F.S.L."/>
            <person name="Hufnagle W.O."/>
            <person name="Kowalik D.J."/>
            <person name="Lagrou M."/>
            <person name="Garber R.L."/>
            <person name="Goltry L."/>
            <person name="Tolentino E."/>
            <person name="Westbrock-Wadman S."/>
            <person name="Yuan Y."/>
            <person name="Brody L.L."/>
            <person name="Coulter S.N."/>
            <person name="Folger K.R."/>
            <person name="Kas A."/>
            <person name="Larbig K."/>
            <person name="Lim R.M."/>
            <person name="Smith K.A."/>
            <person name="Spencer D.H."/>
            <person name="Wong G.K.-S."/>
            <person name="Wu Z."/>
            <person name="Paulsen I.T."/>
            <person name="Reizer J."/>
            <person name="Saier M.H. Jr."/>
            <person name="Hancock R.E.W."/>
            <person name="Lory S."/>
            <person name="Olson M.V."/>
        </authorList>
    </citation>
    <scope>NUCLEOTIDE SEQUENCE [LARGE SCALE GENOMIC DNA]</scope>
    <source>
        <strain>ATCC 15692 / DSM 22644 / CIP 104116 / JCM 14847 / LMG 12228 / 1C / PRS 101 / PAO1</strain>
    </source>
</reference>
<reference key="4">
    <citation type="journal article" date="2001" name="J. Bacteriol.">
        <title>Functional analysis of genes for biosynthesis of pyocyanin and phenazine-1-carboxamide from Pseudomonas aeruginosa PAO1.</title>
        <authorList>
            <person name="Mavrodi D.V."/>
            <person name="Bonsall R.F."/>
            <person name="Delaney S.M."/>
            <person name="Soule M.J."/>
            <person name="Phillips G."/>
            <person name="Thomashow L.S."/>
        </authorList>
    </citation>
    <scope>DISCUSSION OF FUNCTION</scope>
</reference>
<reference key="5">
    <citation type="journal article" date="2013" name="Microbiology">
        <title>The role of two Pseudomonas aeruginosa anthranilate synthases in tryptophan and quorum signal production.</title>
        <authorList>
            <person name="Palmer G.C."/>
            <person name="Jorth P.A."/>
            <person name="Whiteley M."/>
        </authorList>
    </citation>
    <scope>FUNCTION IN PQS BIOSYNTHESIS</scope>
    <scope>DISRUPTION PHENOTYPE</scope>
    <source>
        <strain>UCBPP-PA14</strain>
    </source>
</reference>
<organism>
    <name type="scientific">Pseudomonas aeruginosa (strain ATCC 15692 / DSM 22644 / CIP 104116 / JCM 14847 / LMG 12228 / 1C / PRS 101 / PAO1)</name>
    <dbReference type="NCBI Taxonomy" id="208964"/>
    <lineage>
        <taxon>Bacteria</taxon>
        <taxon>Pseudomonadati</taxon>
        <taxon>Pseudomonadota</taxon>
        <taxon>Gammaproteobacteria</taxon>
        <taxon>Pseudomonadales</taxon>
        <taxon>Pseudomonadaceae</taxon>
        <taxon>Pseudomonas</taxon>
    </lineage>
</organism>
<feature type="chain" id="PRO_0000056906" description="Anthranilate synthase component 2, pyocyanine specific">
    <location>
        <begin position="1"/>
        <end position="200"/>
    </location>
</feature>
<feature type="domain" description="Glutamine amidotransferase type-1" evidence="2">
    <location>
        <begin position="2"/>
        <end position="195"/>
    </location>
</feature>
<feature type="active site" description="Nucleophile; for GATase activity" evidence="2">
    <location>
        <position position="83"/>
    </location>
</feature>
<feature type="active site" description="For GATase activity" evidence="2">
    <location>
        <position position="169"/>
    </location>
</feature>
<feature type="active site" description="For GATase activity" evidence="2">
    <location>
        <position position="171"/>
    </location>
</feature>
<feature type="binding site" evidence="1">
    <location>
        <begin position="56"/>
        <end position="58"/>
    </location>
    <ligand>
        <name>L-glutamine</name>
        <dbReference type="ChEBI" id="CHEBI:58359"/>
    </ligand>
</feature>
<feature type="binding site" evidence="1">
    <location>
        <position position="87"/>
    </location>
    <ligand>
        <name>L-glutamine</name>
        <dbReference type="ChEBI" id="CHEBI:58359"/>
    </ligand>
</feature>
<feature type="binding site" evidence="1">
    <location>
        <begin position="133"/>
        <end position="134"/>
    </location>
    <ligand>
        <name>L-glutamine</name>
        <dbReference type="ChEBI" id="CHEBI:58359"/>
    </ligand>
</feature>
<feature type="sequence variant" description="In strain: PAC174." evidence="8">
    <original>DA</original>
    <variation>ES</variation>
    <location>
        <begin position="148"/>
        <end position="149"/>
    </location>
</feature>
<feature type="sequence variant" description="In strain: PAC174." evidence="8">
    <original>R</original>
    <variation>A</variation>
    <location>
        <position position="195"/>
    </location>
</feature>
<feature type="sequence conflict" description="In Ref. 1; AAA88449." evidence="8" ref="1">
    <original>R</original>
    <variation>A</variation>
    <location>
        <position position="195"/>
    </location>
</feature>
<accession>P09786</accession>
<protein>
    <recommendedName>
        <fullName>Anthranilate synthase component 2, pyocyanine specific</fullName>
        <shortName>AS</shortName>
        <shortName>ASII</shortName>
        <ecNumber>4.1.3.27</ecNumber>
    </recommendedName>
    <alternativeName>
        <fullName evidence="6">Anthranilate synthase beta subunit, pyocyanine specific</fullName>
    </alternativeName>
    <alternativeName>
        <fullName>Anthranilate synthase, GATase component</fullName>
    </alternativeName>
    <alternativeName>
        <fullName>Anthranilate synthase, glutamine amidotransferase component</fullName>
    </alternativeName>
</protein>
<gene>
    <name evidence="7" type="primary">phnB</name>
    <name evidence="7" type="synonym">trpG</name>
    <name type="ordered locus">PA1002</name>
</gene>
<dbReference type="EC" id="4.1.3.27"/>
<dbReference type="EMBL" id="M15733">
    <property type="protein sequence ID" value="AAA26018.1"/>
    <property type="molecule type" value="Genomic_DNA"/>
</dbReference>
<dbReference type="EMBL" id="M33810">
    <property type="protein sequence ID" value="AAA88449.1"/>
    <property type="molecule type" value="Genomic_DNA"/>
</dbReference>
<dbReference type="EMBL" id="M33811">
    <property type="protein sequence ID" value="AAA88452.1"/>
    <property type="molecule type" value="Genomic_DNA"/>
</dbReference>
<dbReference type="EMBL" id="AE004091">
    <property type="protein sequence ID" value="AAG04391.1"/>
    <property type="molecule type" value="Genomic_DNA"/>
</dbReference>
<dbReference type="PIR" id="B35116">
    <property type="entry name" value="B35116"/>
</dbReference>
<dbReference type="PIR" id="C83519">
    <property type="entry name" value="C83519"/>
</dbReference>
<dbReference type="RefSeq" id="NP_249693.1">
    <property type="nucleotide sequence ID" value="NC_002516.2"/>
</dbReference>
<dbReference type="RefSeq" id="WP_003112548.1">
    <property type="nucleotide sequence ID" value="NZ_QZGE01000006.1"/>
</dbReference>
<dbReference type="SMR" id="P09786"/>
<dbReference type="STRING" id="208964.PA1002"/>
<dbReference type="MEROPS" id="C26.960"/>
<dbReference type="PaxDb" id="208964-PA1002"/>
<dbReference type="DNASU" id="880689"/>
<dbReference type="GeneID" id="880689"/>
<dbReference type="KEGG" id="pae:PA1002"/>
<dbReference type="PATRIC" id="fig|208964.12.peg.1034"/>
<dbReference type="PseudoCAP" id="PA1002"/>
<dbReference type="HOGENOM" id="CLU_014340_1_0_6"/>
<dbReference type="InParanoid" id="P09786"/>
<dbReference type="OrthoDB" id="9813383at2"/>
<dbReference type="PhylomeDB" id="P09786"/>
<dbReference type="BioCyc" id="MetaCyc:MONOMER-16008"/>
<dbReference type="BioCyc" id="PAER208964:G1FZ6-1021-MONOMER"/>
<dbReference type="BRENDA" id="4.1.3.27">
    <property type="organism ID" value="5087"/>
</dbReference>
<dbReference type="UniPathway" id="UPA00235"/>
<dbReference type="Proteomes" id="UP000002438">
    <property type="component" value="Chromosome"/>
</dbReference>
<dbReference type="GO" id="GO:0004048">
    <property type="term" value="F:anthranilate phosphoribosyltransferase activity"/>
    <property type="evidence" value="ECO:0000318"/>
    <property type="project" value="GO_Central"/>
</dbReference>
<dbReference type="GO" id="GO:0004049">
    <property type="term" value="F:anthranilate synthase activity"/>
    <property type="evidence" value="ECO:0000315"/>
    <property type="project" value="PseudoCAP"/>
</dbReference>
<dbReference type="GO" id="GO:0000162">
    <property type="term" value="P:L-tryptophan biosynthetic process"/>
    <property type="evidence" value="ECO:0000318"/>
    <property type="project" value="GO_Central"/>
</dbReference>
<dbReference type="GO" id="GO:0002047">
    <property type="term" value="P:phenazine biosynthetic process"/>
    <property type="evidence" value="ECO:0000315"/>
    <property type="project" value="PseudoCAP"/>
</dbReference>
<dbReference type="CDD" id="cd01743">
    <property type="entry name" value="GATase1_Anthranilate_Synthase"/>
    <property type="match status" value="1"/>
</dbReference>
<dbReference type="FunFam" id="3.40.50.880:FF:000003">
    <property type="entry name" value="Anthranilate synthase component II"/>
    <property type="match status" value="1"/>
</dbReference>
<dbReference type="Gene3D" id="3.40.50.880">
    <property type="match status" value="1"/>
</dbReference>
<dbReference type="InterPro" id="IPR050472">
    <property type="entry name" value="Anth_synth/Amidotransfase"/>
</dbReference>
<dbReference type="InterPro" id="IPR029062">
    <property type="entry name" value="Class_I_gatase-like"/>
</dbReference>
<dbReference type="InterPro" id="IPR017926">
    <property type="entry name" value="GATASE"/>
</dbReference>
<dbReference type="InterPro" id="IPR006221">
    <property type="entry name" value="TrpG/PapA_dom"/>
</dbReference>
<dbReference type="NCBIfam" id="TIGR00566">
    <property type="entry name" value="trpG_papA"/>
    <property type="match status" value="1"/>
</dbReference>
<dbReference type="PANTHER" id="PTHR43418:SF2">
    <property type="entry name" value="BIFUNCTIONAL PROTEIN TRPGD"/>
    <property type="match status" value="1"/>
</dbReference>
<dbReference type="PANTHER" id="PTHR43418">
    <property type="entry name" value="MULTIFUNCTIONAL TRYPTOPHAN BIOSYNTHESIS PROTEIN-RELATED"/>
    <property type="match status" value="1"/>
</dbReference>
<dbReference type="Pfam" id="PF00117">
    <property type="entry name" value="GATase"/>
    <property type="match status" value="1"/>
</dbReference>
<dbReference type="PRINTS" id="PR00097">
    <property type="entry name" value="ANTSNTHASEII"/>
</dbReference>
<dbReference type="PRINTS" id="PR00099">
    <property type="entry name" value="CPSGATASE"/>
</dbReference>
<dbReference type="PRINTS" id="PR00096">
    <property type="entry name" value="GATASE"/>
</dbReference>
<dbReference type="SUPFAM" id="SSF52317">
    <property type="entry name" value="Class I glutamine amidotransferase-like"/>
    <property type="match status" value="1"/>
</dbReference>
<dbReference type="PROSITE" id="PS51273">
    <property type="entry name" value="GATASE_TYPE_1"/>
    <property type="match status" value="1"/>
</dbReference>